<name>RRF_WOLPP</name>
<feature type="chain" id="PRO_1000090802" description="Ribosome-recycling factor">
    <location>
        <begin position="1"/>
        <end position="185"/>
    </location>
</feature>
<protein>
    <recommendedName>
        <fullName evidence="1">Ribosome-recycling factor</fullName>
        <shortName evidence="1">RRF</shortName>
    </recommendedName>
    <alternativeName>
        <fullName evidence="1">Ribosome-releasing factor</fullName>
    </alternativeName>
</protein>
<reference key="1">
    <citation type="journal article" date="2008" name="Mol. Biol. Evol.">
        <title>Genome evolution of Wolbachia strain wPip from the Culex pipiens group.</title>
        <authorList>
            <person name="Klasson L."/>
            <person name="Walker T."/>
            <person name="Sebaihia M."/>
            <person name="Sanders M.J."/>
            <person name="Quail M.A."/>
            <person name="Lord A."/>
            <person name="Sanders S."/>
            <person name="Earl J."/>
            <person name="O'Neill S.L."/>
            <person name="Thomson N."/>
            <person name="Sinkins S.P."/>
            <person name="Parkhill J."/>
        </authorList>
    </citation>
    <scope>NUCLEOTIDE SEQUENCE [LARGE SCALE GENOMIC DNA]</scope>
    <source>
        <strain>wPip</strain>
    </source>
</reference>
<comment type="function">
    <text evidence="1">Responsible for the release of ribosomes from messenger RNA at the termination of protein biosynthesis. May increase the efficiency of translation by recycling ribosomes from one round of translation to another.</text>
</comment>
<comment type="subcellular location">
    <subcellularLocation>
        <location evidence="1">Cytoplasm</location>
    </subcellularLocation>
</comment>
<comment type="similarity">
    <text evidence="1">Belongs to the RRF family.</text>
</comment>
<dbReference type="EMBL" id="AM999887">
    <property type="protein sequence ID" value="CAQ55354.1"/>
    <property type="molecule type" value="Genomic_DNA"/>
</dbReference>
<dbReference type="RefSeq" id="WP_007302601.1">
    <property type="nucleotide sequence ID" value="NC_010981.1"/>
</dbReference>
<dbReference type="SMR" id="B3CNH2"/>
<dbReference type="KEGG" id="wpi:WP1246"/>
<dbReference type="eggNOG" id="COG0233">
    <property type="taxonomic scope" value="Bacteria"/>
</dbReference>
<dbReference type="HOGENOM" id="CLU_073981_2_1_5"/>
<dbReference type="Proteomes" id="UP000008814">
    <property type="component" value="Chromosome"/>
</dbReference>
<dbReference type="GO" id="GO:0005829">
    <property type="term" value="C:cytosol"/>
    <property type="evidence" value="ECO:0007669"/>
    <property type="project" value="GOC"/>
</dbReference>
<dbReference type="GO" id="GO:0043023">
    <property type="term" value="F:ribosomal large subunit binding"/>
    <property type="evidence" value="ECO:0007669"/>
    <property type="project" value="TreeGrafter"/>
</dbReference>
<dbReference type="GO" id="GO:0002184">
    <property type="term" value="P:cytoplasmic translational termination"/>
    <property type="evidence" value="ECO:0007669"/>
    <property type="project" value="TreeGrafter"/>
</dbReference>
<dbReference type="CDD" id="cd00520">
    <property type="entry name" value="RRF"/>
    <property type="match status" value="1"/>
</dbReference>
<dbReference type="FunFam" id="1.10.132.20:FF:000001">
    <property type="entry name" value="Ribosome-recycling factor"/>
    <property type="match status" value="1"/>
</dbReference>
<dbReference type="FunFam" id="3.30.1360.40:FF:000001">
    <property type="entry name" value="Ribosome-recycling factor"/>
    <property type="match status" value="1"/>
</dbReference>
<dbReference type="Gene3D" id="3.30.1360.40">
    <property type="match status" value="1"/>
</dbReference>
<dbReference type="Gene3D" id="1.10.132.20">
    <property type="entry name" value="Ribosome-recycling factor"/>
    <property type="match status" value="1"/>
</dbReference>
<dbReference type="HAMAP" id="MF_00040">
    <property type="entry name" value="RRF"/>
    <property type="match status" value="1"/>
</dbReference>
<dbReference type="InterPro" id="IPR002661">
    <property type="entry name" value="Ribosome_recyc_fac"/>
</dbReference>
<dbReference type="InterPro" id="IPR023584">
    <property type="entry name" value="Ribosome_recyc_fac_dom"/>
</dbReference>
<dbReference type="InterPro" id="IPR036191">
    <property type="entry name" value="RRF_sf"/>
</dbReference>
<dbReference type="NCBIfam" id="TIGR00496">
    <property type="entry name" value="frr"/>
    <property type="match status" value="1"/>
</dbReference>
<dbReference type="PANTHER" id="PTHR20982:SF3">
    <property type="entry name" value="MITOCHONDRIAL RIBOSOME RECYCLING FACTOR PSEUDO 1"/>
    <property type="match status" value="1"/>
</dbReference>
<dbReference type="PANTHER" id="PTHR20982">
    <property type="entry name" value="RIBOSOME RECYCLING FACTOR"/>
    <property type="match status" value="1"/>
</dbReference>
<dbReference type="Pfam" id="PF01765">
    <property type="entry name" value="RRF"/>
    <property type="match status" value="1"/>
</dbReference>
<dbReference type="SUPFAM" id="SSF55194">
    <property type="entry name" value="Ribosome recycling factor, RRF"/>
    <property type="match status" value="1"/>
</dbReference>
<proteinExistence type="inferred from homology"/>
<accession>B3CNH2</accession>
<sequence>MLNEIKAKTKERMLKTIQSFHDDMKGVRTGRANASLLDGIVVNIYGGHQKLNQVAGVSAIDNKTLSVKVWDATAIGEVKNAIINANLNLNPVVEGNTIRIVLPDLTQETREKLVKLLHQFSENARVAIRNIRRDVMEEIEEMKKNKEISEDDFHVAKKEIQNITDDNVKKVDDDLSIKEKDILHH</sequence>
<gene>
    <name evidence="1" type="primary">frr</name>
    <name type="ordered locus">WP1246</name>
</gene>
<organism>
    <name type="scientific">Wolbachia pipientis subsp. Culex pipiens (strain wPip)</name>
    <dbReference type="NCBI Taxonomy" id="570417"/>
    <lineage>
        <taxon>Bacteria</taxon>
        <taxon>Pseudomonadati</taxon>
        <taxon>Pseudomonadota</taxon>
        <taxon>Alphaproteobacteria</taxon>
        <taxon>Rickettsiales</taxon>
        <taxon>Anaplasmataceae</taxon>
        <taxon>Wolbachieae</taxon>
        <taxon>Wolbachia</taxon>
    </lineage>
</organism>
<evidence type="ECO:0000255" key="1">
    <source>
        <dbReference type="HAMAP-Rule" id="MF_00040"/>
    </source>
</evidence>
<keyword id="KW-0963">Cytoplasm</keyword>
<keyword id="KW-0648">Protein biosynthesis</keyword>